<sequence>MSSSNVKKVALAYSGGLDTSVILKWLQETYGCEVVTFTADLGQGEEVEPARAKAQAMGVKEIYIDDLREEFSRDFVFPMFRANAIYEGEYLLGTSIARPLIAKRLIEIANETGADAIAHGATGKGNDQVRFELGAYALRPDIRVIAPWREWELTSRETLLAYAESRGIPIEMKRGKTSPYSMDANLLHISYEGGILEDPWAEPEETMWRWSVSPENAPDRPTYVELTYEHGDIVAIDGERMTAAAVLARLNQLGGANGIGRLDIVENRYVGMKSRGCYETPGGTIMLKAHRAIESITLDREVAHLKDELMPRYASLIYNGYWWSPERRMLQQMIDASQATVNGVVRVKLYKGNVSVVGRKSESNSLFDMNIATFEDDRGAYDQKDAEGFIKLNALRLRIAGRKGASFA</sequence>
<organism>
    <name type="scientific">Methylococcus capsulatus (strain ATCC 33009 / NCIMB 11132 / Bath)</name>
    <dbReference type="NCBI Taxonomy" id="243233"/>
    <lineage>
        <taxon>Bacteria</taxon>
        <taxon>Pseudomonadati</taxon>
        <taxon>Pseudomonadota</taxon>
        <taxon>Gammaproteobacteria</taxon>
        <taxon>Methylococcales</taxon>
        <taxon>Methylococcaceae</taxon>
        <taxon>Methylococcus</taxon>
    </lineage>
</organism>
<protein>
    <recommendedName>
        <fullName evidence="1">Argininosuccinate synthase</fullName>
        <ecNumber evidence="1">6.3.4.5</ecNumber>
    </recommendedName>
    <alternativeName>
        <fullName evidence="1">Citrulline--aspartate ligase</fullName>
    </alternativeName>
</protein>
<name>ASSY_METCA</name>
<feature type="chain" id="PRO_0000148611" description="Argininosuccinate synthase">
    <location>
        <begin position="1"/>
        <end position="408"/>
    </location>
</feature>
<feature type="binding site" evidence="1">
    <location>
        <begin position="12"/>
        <end position="20"/>
    </location>
    <ligand>
        <name>ATP</name>
        <dbReference type="ChEBI" id="CHEBI:30616"/>
    </ligand>
</feature>
<feature type="binding site" evidence="1">
    <location>
        <position position="39"/>
    </location>
    <ligand>
        <name>ATP</name>
        <dbReference type="ChEBI" id="CHEBI:30616"/>
    </ligand>
</feature>
<feature type="binding site" evidence="1">
    <location>
        <position position="90"/>
    </location>
    <ligand>
        <name>L-citrulline</name>
        <dbReference type="ChEBI" id="CHEBI:57743"/>
    </ligand>
</feature>
<feature type="binding site" evidence="1">
    <location>
        <position position="95"/>
    </location>
    <ligand>
        <name>L-citrulline</name>
        <dbReference type="ChEBI" id="CHEBI:57743"/>
    </ligand>
</feature>
<feature type="binding site" evidence="1">
    <location>
        <position position="120"/>
    </location>
    <ligand>
        <name>ATP</name>
        <dbReference type="ChEBI" id="CHEBI:30616"/>
    </ligand>
</feature>
<feature type="binding site" evidence="1">
    <location>
        <position position="122"/>
    </location>
    <ligand>
        <name>L-aspartate</name>
        <dbReference type="ChEBI" id="CHEBI:29991"/>
    </ligand>
</feature>
<feature type="binding site" evidence="1">
    <location>
        <position position="126"/>
    </location>
    <ligand>
        <name>L-aspartate</name>
        <dbReference type="ChEBI" id="CHEBI:29991"/>
    </ligand>
</feature>
<feature type="binding site" evidence="1">
    <location>
        <position position="126"/>
    </location>
    <ligand>
        <name>L-citrulline</name>
        <dbReference type="ChEBI" id="CHEBI:57743"/>
    </ligand>
</feature>
<feature type="binding site" evidence="1">
    <location>
        <position position="127"/>
    </location>
    <ligand>
        <name>L-aspartate</name>
        <dbReference type="ChEBI" id="CHEBI:29991"/>
    </ligand>
</feature>
<feature type="binding site" evidence="1">
    <location>
        <position position="130"/>
    </location>
    <ligand>
        <name>L-citrulline</name>
        <dbReference type="ChEBI" id="CHEBI:57743"/>
    </ligand>
</feature>
<feature type="binding site" evidence="1">
    <location>
        <position position="181"/>
    </location>
    <ligand>
        <name>L-citrulline</name>
        <dbReference type="ChEBI" id="CHEBI:57743"/>
    </ligand>
</feature>
<feature type="binding site" evidence="1">
    <location>
        <position position="190"/>
    </location>
    <ligand>
        <name>L-citrulline</name>
        <dbReference type="ChEBI" id="CHEBI:57743"/>
    </ligand>
</feature>
<feature type="binding site" evidence="1">
    <location>
        <position position="266"/>
    </location>
    <ligand>
        <name>L-citrulline</name>
        <dbReference type="ChEBI" id="CHEBI:57743"/>
    </ligand>
</feature>
<feature type="binding site" evidence="1">
    <location>
        <position position="278"/>
    </location>
    <ligand>
        <name>L-citrulline</name>
        <dbReference type="ChEBI" id="CHEBI:57743"/>
    </ligand>
</feature>
<accession>Q609X7</accession>
<keyword id="KW-0028">Amino-acid biosynthesis</keyword>
<keyword id="KW-0055">Arginine biosynthesis</keyword>
<keyword id="KW-0067">ATP-binding</keyword>
<keyword id="KW-0963">Cytoplasm</keyword>
<keyword id="KW-0436">Ligase</keyword>
<keyword id="KW-0547">Nucleotide-binding</keyword>
<keyword id="KW-1185">Reference proteome</keyword>
<gene>
    <name evidence="1" type="primary">argG</name>
    <name type="ordered locus">MCA1099</name>
</gene>
<proteinExistence type="inferred from homology"/>
<dbReference type="EC" id="6.3.4.5" evidence="1"/>
<dbReference type="EMBL" id="AE017282">
    <property type="protein sequence ID" value="AAU92618.1"/>
    <property type="molecule type" value="Genomic_DNA"/>
</dbReference>
<dbReference type="RefSeq" id="WP_010960394.1">
    <property type="nucleotide sequence ID" value="NC_002977.6"/>
</dbReference>
<dbReference type="SMR" id="Q609X7"/>
<dbReference type="STRING" id="243233.MCA1099"/>
<dbReference type="GeneID" id="88223392"/>
<dbReference type="KEGG" id="mca:MCA1099"/>
<dbReference type="eggNOG" id="COG0137">
    <property type="taxonomic scope" value="Bacteria"/>
</dbReference>
<dbReference type="HOGENOM" id="CLU_032784_4_2_6"/>
<dbReference type="UniPathway" id="UPA00068">
    <property type="reaction ID" value="UER00113"/>
</dbReference>
<dbReference type="Proteomes" id="UP000006821">
    <property type="component" value="Chromosome"/>
</dbReference>
<dbReference type="GO" id="GO:0005737">
    <property type="term" value="C:cytoplasm"/>
    <property type="evidence" value="ECO:0007669"/>
    <property type="project" value="UniProtKB-SubCell"/>
</dbReference>
<dbReference type="GO" id="GO:0004055">
    <property type="term" value="F:argininosuccinate synthase activity"/>
    <property type="evidence" value="ECO:0007669"/>
    <property type="project" value="UniProtKB-UniRule"/>
</dbReference>
<dbReference type="GO" id="GO:0005524">
    <property type="term" value="F:ATP binding"/>
    <property type="evidence" value="ECO:0007669"/>
    <property type="project" value="UniProtKB-UniRule"/>
</dbReference>
<dbReference type="GO" id="GO:0000053">
    <property type="term" value="P:argininosuccinate metabolic process"/>
    <property type="evidence" value="ECO:0007669"/>
    <property type="project" value="TreeGrafter"/>
</dbReference>
<dbReference type="GO" id="GO:0006526">
    <property type="term" value="P:L-arginine biosynthetic process"/>
    <property type="evidence" value="ECO:0007669"/>
    <property type="project" value="UniProtKB-UniRule"/>
</dbReference>
<dbReference type="GO" id="GO:0000050">
    <property type="term" value="P:urea cycle"/>
    <property type="evidence" value="ECO:0007669"/>
    <property type="project" value="TreeGrafter"/>
</dbReference>
<dbReference type="CDD" id="cd01999">
    <property type="entry name" value="ASS"/>
    <property type="match status" value="1"/>
</dbReference>
<dbReference type="FunFam" id="1.20.5.470:FF:000001">
    <property type="entry name" value="Argininosuccinate synthase"/>
    <property type="match status" value="1"/>
</dbReference>
<dbReference type="FunFam" id="3.40.50.620:FF:000019">
    <property type="entry name" value="Argininosuccinate synthase"/>
    <property type="match status" value="1"/>
</dbReference>
<dbReference type="FunFam" id="3.90.1260.10:FF:000007">
    <property type="entry name" value="Argininosuccinate synthase"/>
    <property type="match status" value="1"/>
</dbReference>
<dbReference type="Gene3D" id="3.90.1260.10">
    <property type="entry name" value="Argininosuccinate synthetase, chain A, domain 2"/>
    <property type="match status" value="1"/>
</dbReference>
<dbReference type="Gene3D" id="3.40.50.620">
    <property type="entry name" value="HUPs"/>
    <property type="match status" value="1"/>
</dbReference>
<dbReference type="Gene3D" id="1.20.5.470">
    <property type="entry name" value="Single helix bin"/>
    <property type="match status" value="1"/>
</dbReference>
<dbReference type="HAMAP" id="MF_00005">
    <property type="entry name" value="Arg_succ_synth_type1"/>
    <property type="match status" value="1"/>
</dbReference>
<dbReference type="InterPro" id="IPR048268">
    <property type="entry name" value="Arginosuc_syn_C"/>
</dbReference>
<dbReference type="InterPro" id="IPR048267">
    <property type="entry name" value="Arginosuc_syn_N"/>
</dbReference>
<dbReference type="InterPro" id="IPR001518">
    <property type="entry name" value="Arginosuc_synth"/>
</dbReference>
<dbReference type="InterPro" id="IPR018223">
    <property type="entry name" value="Arginosuc_synth_CS"/>
</dbReference>
<dbReference type="InterPro" id="IPR023434">
    <property type="entry name" value="Arginosuc_synth_type_1_subfam"/>
</dbReference>
<dbReference type="InterPro" id="IPR024074">
    <property type="entry name" value="AS_cat/multimer_dom_body"/>
</dbReference>
<dbReference type="InterPro" id="IPR014729">
    <property type="entry name" value="Rossmann-like_a/b/a_fold"/>
</dbReference>
<dbReference type="NCBIfam" id="TIGR00032">
    <property type="entry name" value="argG"/>
    <property type="match status" value="1"/>
</dbReference>
<dbReference type="NCBIfam" id="NF001770">
    <property type="entry name" value="PRK00509.1"/>
    <property type="match status" value="1"/>
</dbReference>
<dbReference type="PANTHER" id="PTHR11587">
    <property type="entry name" value="ARGININOSUCCINATE SYNTHASE"/>
    <property type="match status" value="1"/>
</dbReference>
<dbReference type="PANTHER" id="PTHR11587:SF2">
    <property type="entry name" value="ARGININOSUCCINATE SYNTHASE"/>
    <property type="match status" value="1"/>
</dbReference>
<dbReference type="Pfam" id="PF20979">
    <property type="entry name" value="Arginosuc_syn_C"/>
    <property type="match status" value="1"/>
</dbReference>
<dbReference type="Pfam" id="PF00764">
    <property type="entry name" value="Arginosuc_synth"/>
    <property type="match status" value="1"/>
</dbReference>
<dbReference type="SUPFAM" id="SSF52402">
    <property type="entry name" value="Adenine nucleotide alpha hydrolases-like"/>
    <property type="match status" value="1"/>
</dbReference>
<dbReference type="SUPFAM" id="SSF69864">
    <property type="entry name" value="Argininosuccinate synthetase, C-terminal domain"/>
    <property type="match status" value="1"/>
</dbReference>
<dbReference type="PROSITE" id="PS00564">
    <property type="entry name" value="ARGININOSUCCIN_SYN_1"/>
    <property type="match status" value="1"/>
</dbReference>
<dbReference type="PROSITE" id="PS00565">
    <property type="entry name" value="ARGININOSUCCIN_SYN_2"/>
    <property type="match status" value="1"/>
</dbReference>
<evidence type="ECO:0000255" key="1">
    <source>
        <dbReference type="HAMAP-Rule" id="MF_00005"/>
    </source>
</evidence>
<reference key="1">
    <citation type="journal article" date="2004" name="PLoS Biol.">
        <title>Genomic insights into methanotrophy: the complete genome sequence of Methylococcus capsulatus (Bath).</title>
        <authorList>
            <person name="Ward N.L."/>
            <person name="Larsen O."/>
            <person name="Sakwa J."/>
            <person name="Bruseth L."/>
            <person name="Khouri H.M."/>
            <person name="Durkin A.S."/>
            <person name="Dimitrov G."/>
            <person name="Jiang L."/>
            <person name="Scanlan D."/>
            <person name="Kang K.H."/>
            <person name="Lewis M.R."/>
            <person name="Nelson K.E."/>
            <person name="Methe B.A."/>
            <person name="Wu M."/>
            <person name="Heidelberg J.F."/>
            <person name="Paulsen I.T."/>
            <person name="Fouts D.E."/>
            <person name="Ravel J."/>
            <person name="Tettelin H."/>
            <person name="Ren Q."/>
            <person name="Read T.D."/>
            <person name="DeBoy R.T."/>
            <person name="Seshadri R."/>
            <person name="Salzberg S.L."/>
            <person name="Jensen H.B."/>
            <person name="Birkeland N.K."/>
            <person name="Nelson W.C."/>
            <person name="Dodson R.J."/>
            <person name="Grindhaug S.H."/>
            <person name="Holt I.E."/>
            <person name="Eidhammer I."/>
            <person name="Jonasen I."/>
            <person name="Vanaken S."/>
            <person name="Utterback T.R."/>
            <person name="Feldblyum T.V."/>
            <person name="Fraser C.M."/>
            <person name="Lillehaug J.R."/>
            <person name="Eisen J.A."/>
        </authorList>
    </citation>
    <scope>NUCLEOTIDE SEQUENCE [LARGE SCALE GENOMIC DNA]</scope>
    <source>
        <strain>ATCC 33009 / NCIMB 11132 / Bath</strain>
    </source>
</reference>
<comment type="catalytic activity">
    <reaction evidence="1">
        <text>L-citrulline + L-aspartate + ATP = 2-(N(omega)-L-arginino)succinate + AMP + diphosphate + H(+)</text>
        <dbReference type="Rhea" id="RHEA:10932"/>
        <dbReference type="ChEBI" id="CHEBI:15378"/>
        <dbReference type="ChEBI" id="CHEBI:29991"/>
        <dbReference type="ChEBI" id="CHEBI:30616"/>
        <dbReference type="ChEBI" id="CHEBI:33019"/>
        <dbReference type="ChEBI" id="CHEBI:57472"/>
        <dbReference type="ChEBI" id="CHEBI:57743"/>
        <dbReference type="ChEBI" id="CHEBI:456215"/>
        <dbReference type="EC" id="6.3.4.5"/>
    </reaction>
</comment>
<comment type="pathway">
    <text evidence="1">Amino-acid biosynthesis; L-arginine biosynthesis; L-arginine from L-ornithine and carbamoyl phosphate: step 2/3.</text>
</comment>
<comment type="subunit">
    <text evidence="1">Homotetramer.</text>
</comment>
<comment type="subcellular location">
    <subcellularLocation>
        <location evidence="1">Cytoplasm</location>
    </subcellularLocation>
</comment>
<comment type="similarity">
    <text evidence="1">Belongs to the argininosuccinate synthase family. Type 1 subfamily.</text>
</comment>